<evidence type="ECO:0000255" key="1">
    <source>
        <dbReference type="HAMAP-Rule" id="MF_00600"/>
    </source>
</evidence>
<gene>
    <name evidence="1" type="primary">groEL</name>
    <name evidence="1" type="synonym">groL</name>
    <name type="ordered locus">BCA_0320</name>
</gene>
<comment type="function">
    <text evidence="1">Together with its co-chaperonin GroES, plays an essential role in assisting protein folding. The GroEL-GroES system forms a nano-cage that allows encapsulation of the non-native substrate proteins and provides a physical environment optimized to promote and accelerate protein folding.</text>
</comment>
<comment type="catalytic activity">
    <reaction evidence="1">
        <text>ATP + H2O + a folded polypeptide = ADP + phosphate + an unfolded polypeptide.</text>
        <dbReference type="EC" id="5.6.1.7"/>
    </reaction>
</comment>
<comment type="subunit">
    <text evidence="1">Forms a cylinder of 14 subunits composed of two heptameric rings stacked back-to-back. Interacts with the co-chaperonin GroES.</text>
</comment>
<comment type="subcellular location">
    <subcellularLocation>
        <location evidence="1">Cytoplasm</location>
    </subcellularLocation>
</comment>
<comment type="similarity">
    <text evidence="1">Belongs to the chaperonin (HSP60) family.</text>
</comment>
<keyword id="KW-0067">ATP-binding</keyword>
<keyword id="KW-0143">Chaperone</keyword>
<keyword id="KW-0963">Cytoplasm</keyword>
<keyword id="KW-0413">Isomerase</keyword>
<keyword id="KW-0547">Nucleotide-binding</keyword>
<proteinExistence type="inferred from homology"/>
<protein>
    <recommendedName>
        <fullName evidence="1">Chaperonin GroEL</fullName>
        <ecNumber evidence="1">5.6.1.7</ecNumber>
    </recommendedName>
    <alternativeName>
        <fullName evidence="1">60 kDa chaperonin</fullName>
    </alternativeName>
    <alternativeName>
        <fullName evidence="1">Chaperonin-60</fullName>
        <shortName evidence="1">Cpn60</shortName>
    </alternativeName>
</protein>
<reference key="1">
    <citation type="submission" date="2009-02" db="EMBL/GenBank/DDBJ databases">
        <title>Genome sequence of Bacillus cereus 03BB102.</title>
        <authorList>
            <person name="Dodson R.J."/>
            <person name="Jackson P."/>
            <person name="Munk A.C."/>
            <person name="Brettin T."/>
            <person name="Bruce D."/>
            <person name="Detter C."/>
            <person name="Tapia R."/>
            <person name="Han C."/>
            <person name="Sutton G."/>
            <person name="Sims D."/>
        </authorList>
    </citation>
    <scope>NUCLEOTIDE SEQUENCE [LARGE SCALE GENOMIC DNA]</scope>
    <source>
        <strain>03BB102</strain>
    </source>
</reference>
<accession>C1EUB1</accession>
<name>CH60_BACC3</name>
<organism>
    <name type="scientific">Bacillus cereus (strain 03BB102)</name>
    <dbReference type="NCBI Taxonomy" id="572264"/>
    <lineage>
        <taxon>Bacteria</taxon>
        <taxon>Bacillati</taxon>
        <taxon>Bacillota</taxon>
        <taxon>Bacilli</taxon>
        <taxon>Bacillales</taxon>
        <taxon>Bacillaceae</taxon>
        <taxon>Bacillus</taxon>
        <taxon>Bacillus cereus group</taxon>
    </lineage>
</organism>
<dbReference type="EC" id="5.6.1.7" evidence="1"/>
<dbReference type="EMBL" id="CP001407">
    <property type="protein sequence ID" value="ACO29343.1"/>
    <property type="molecule type" value="Genomic_DNA"/>
</dbReference>
<dbReference type="RefSeq" id="WP_001029999.1">
    <property type="nucleotide sequence ID" value="NZ_CP009318.1"/>
</dbReference>
<dbReference type="SMR" id="C1EUB1"/>
<dbReference type="GeneID" id="69534143"/>
<dbReference type="KEGG" id="bcx:BCA_0320"/>
<dbReference type="PATRIC" id="fig|572264.18.peg.328"/>
<dbReference type="Proteomes" id="UP000002210">
    <property type="component" value="Chromosome"/>
</dbReference>
<dbReference type="GO" id="GO:0005737">
    <property type="term" value="C:cytoplasm"/>
    <property type="evidence" value="ECO:0007669"/>
    <property type="project" value="UniProtKB-SubCell"/>
</dbReference>
<dbReference type="GO" id="GO:0005524">
    <property type="term" value="F:ATP binding"/>
    <property type="evidence" value="ECO:0007669"/>
    <property type="project" value="UniProtKB-UniRule"/>
</dbReference>
<dbReference type="GO" id="GO:0140662">
    <property type="term" value="F:ATP-dependent protein folding chaperone"/>
    <property type="evidence" value="ECO:0007669"/>
    <property type="project" value="InterPro"/>
</dbReference>
<dbReference type="GO" id="GO:0016853">
    <property type="term" value="F:isomerase activity"/>
    <property type="evidence" value="ECO:0007669"/>
    <property type="project" value="UniProtKB-KW"/>
</dbReference>
<dbReference type="GO" id="GO:0051082">
    <property type="term" value="F:unfolded protein binding"/>
    <property type="evidence" value="ECO:0007669"/>
    <property type="project" value="UniProtKB-UniRule"/>
</dbReference>
<dbReference type="GO" id="GO:0042026">
    <property type="term" value="P:protein refolding"/>
    <property type="evidence" value="ECO:0007669"/>
    <property type="project" value="UniProtKB-UniRule"/>
</dbReference>
<dbReference type="CDD" id="cd03344">
    <property type="entry name" value="GroEL"/>
    <property type="match status" value="1"/>
</dbReference>
<dbReference type="FunFam" id="1.10.560.10:FF:000001">
    <property type="entry name" value="60 kDa chaperonin"/>
    <property type="match status" value="1"/>
</dbReference>
<dbReference type="FunFam" id="3.50.7.10:FF:000001">
    <property type="entry name" value="60 kDa chaperonin"/>
    <property type="match status" value="1"/>
</dbReference>
<dbReference type="Gene3D" id="3.50.7.10">
    <property type="entry name" value="GroEL"/>
    <property type="match status" value="1"/>
</dbReference>
<dbReference type="Gene3D" id="1.10.560.10">
    <property type="entry name" value="GroEL-like equatorial domain"/>
    <property type="match status" value="1"/>
</dbReference>
<dbReference type="Gene3D" id="3.30.260.10">
    <property type="entry name" value="TCP-1-like chaperonin intermediate domain"/>
    <property type="match status" value="1"/>
</dbReference>
<dbReference type="HAMAP" id="MF_00600">
    <property type="entry name" value="CH60"/>
    <property type="match status" value="1"/>
</dbReference>
<dbReference type="InterPro" id="IPR018370">
    <property type="entry name" value="Chaperonin_Cpn60_CS"/>
</dbReference>
<dbReference type="InterPro" id="IPR001844">
    <property type="entry name" value="Cpn60/GroEL"/>
</dbReference>
<dbReference type="InterPro" id="IPR002423">
    <property type="entry name" value="Cpn60/GroEL/TCP-1"/>
</dbReference>
<dbReference type="InterPro" id="IPR027409">
    <property type="entry name" value="GroEL-like_apical_dom_sf"/>
</dbReference>
<dbReference type="InterPro" id="IPR027413">
    <property type="entry name" value="GROEL-like_equatorial_sf"/>
</dbReference>
<dbReference type="InterPro" id="IPR027410">
    <property type="entry name" value="TCP-1-like_intermed_sf"/>
</dbReference>
<dbReference type="NCBIfam" id="TIGR02348">
    <property type="entry name" value="GroEL"/>
    <property type="match status" value="1"/>
</dbReference>
<dbReference type="NCBIfam" id="NF000592">
    <property type="entry name" value="PRK00013.1"/>
    <property type="match status" value="1"/>
</dbReference>
<dbReference type="NCBIfam" id="NF009487">
    <property type="entry name" value="PRK12849.1"/>
    <property type="match status" value="1"/>
</dbReference>
<dbReference type="NCBIfam" id="NF009488">
    <property type="entry name" value="PRK12850.1"/>
    <property type="match status" value="1"/>
</dbReference>
<dbReference type="NCBIfam" id="NF009489">
    <property type="entry name" value="PRK12851.1"/>
    <property type="match status" value="1"/>
</dbReference>
<dbReference type="PANTHER" id="PTHR45633">
    <property type="entry name" value="60 KDA HEAT SHOCK PROTEIN, MITOCHONDRIAL"/>
    <property type="match status" value="1"/>
</dbReference>
<dbReference type="Pfam" id="PF00118">
    <property type="entry name" value="Cpn60_TCP1"/>
    <property type="match status" value="1"/>
</dbReference>
<dbReference type="PRINTS" id="PR00298">
    <property type="entry name" value="CHAPERONIN60"/>
</dbReference>
<dbReference type="SUPFAM" id="SSF52029">
    <property type="entry name" value="GroEL apical domain-like"/>
    <property type="match status" value="1"/>
</dbReference>
<dbReference type="SUPFAM" id="SSF48592">
    <property type="entry name" value="GroEL equatorial domain-like"/>
    <property type="match status" value="1"/>
</dbReference>
<dbReference type="SUPFAM" id="SSF54849">
    <property type="entry name" value="GroEL-intermediate domain like"/>
    <property type="match status" value="1"/>
</dbReference>
<dbReference type="PROSITE" id="PS00296">
    <property type="entry name" value="CHAPERONINS_CPN60"/>
    <property type="match status" value="1"/>
</dbReference>
<sequence>MAKDIKFSEEARRSMLRGVDTLANAVKVTLGPKGRNVVLEKKFGSPLITNDGVTIAKEIELEDAFENMGAKLVAEVASKTNDVAGDGTTTATVLAQAMIREGLKNVTAGANPMGLRKGIEKAVVAAVEELKTISKPIEGKSSIAQVAAISAADEEVGQLIAEAMERVGNDGVITLEESKGFTTELDVVEGMQFDRGYASPYMITDSDKMEAVLDNPYILITDKKISNIQEILPVLEQVVQQGKPLLIIAEDVEGEALATLVVNKLRGTFNVVAVKAPGFGDRRKAMLEDIAILTGGEVITEELGRDLKSATVESLGRAGKVVVTKENTTVVEGVGSTEQIEARIGQIRAQLEETTSEFDREKLQERLAKLAGGVAVIKVGAATETELKERKLRIEDALNSTRAAVEEGIVAGGGTSLMNVYTKVASIVAEGDEATGINIVLRALEEPVRQIAINAGLEGSVVVERLKGEKVGVGFNAATGEWVNMLETGIVDPAKVTRSALQNAASVAAMFLTTEAVVADKPEPNAPAMPDMGGMGMGGMGGMM</sequence>
<feature type="chain" id="PRO_1000147015" description="Chaperonin GroEL">
    <location>
        <begin position="1"/>
        <end position="544"/>
    </location>
</feature>
<feature type="binding site" evidence="1">
    <location>
        <begin position="29"/>
        <end position="32"/>
    </location>
    <ligand>
        <name>ATP</name>
        <dbReference type="ChEBI" id="CHEBI:30616"/>
    </ligand>
</feature>
<feature type="binding site" evidence="1">
    <location>
        <begin position="86"/>
        <end position="90"/>
    </location>
    <ligand>
        <name>ATP</name>
        <dbReference type="ChEBI" id="CHEBI:30616"/>
    </ligand>
</feature>
<feature type="binding site" evidence="1">
    <location>
        <position position="413"/>
    </location>
    <ligand>
        <name>ATP</name>
        <dbReference type="ChEBI" id="CHEBI:30616"/>
    </ligand>
</feature>
<feature type="binding site" evidence="1">
    <location>
        <begin position="476"/>
        <end position="478"/>
    </location>
    <ligand>
        <name>ATP</name>
        <dbReference type="ChEBI" id="CHEBI:30616"/>
    </ligand>
</feature>
<feature type="binding site" evidence="1">
    <location>
        <position position="492"/>
    </location>
    <ligand>
        <name>ATP</name>
        <dbReference type="ChEBI" id="CHEBI:30616"/>
    </ligand>
</feature>